<sequence>MSEAPLILLAAGGTGGHLFPAEALGVVLMKRGLRVRLVTDSRAMRYSGLFSADMIDVVPSETVRGRTPWALARTGVMLGAGTALAIGLMMRLRPAAVIGFGGYPTLPPLFAARALRIPTLIHDANAVMGRANRLLSRRVSAIATSLPGVLDRDPELAAKTTTTGTPMRPAILAAAAVPFAPLDAEEPLRLLVVGGSQGARVMADIVPGALDELDPALLRRLALTQQVRDEDMSRVRAVYDRLKIACELAPFFSDLPARLAASQLVVSRSGAGTVAELGAIGRPSILVPLPGALDQDQFANAGVLADAGGAIRIVQGDFTSERLAAEITALAADPQKLTAMATAARTVGRLDAADRLADLVMQVARI</sequence>
<organism>
    <name type="scientific">Rhodopseudomonas palustris (strain BisB5)</name>
    <dbReference type="NCBI Taxonomy" id="316057"/>
    <lineage>
        <taxon>Bacteria</taxon>
        <taxon>Pseudomonadati</taxon>
        <taxon>Pseudomonadota</taxon>
        <taxon>Alphaproteobacteria</taxon>
        <taxon>Hyphomicrobiales</taxon>
        <taxon>Nitrobacteraceae</taxon>
        <taxon>Rhodopseudomonas</taxon>
    </lineage>
</organism>
<evidence type="ECO:0000255" key="1">
    <source>
        <dbReference type="HAMAP-Rule" id="MF_00033"/>
    </source>
</evidence>
<feature type="chain" id="PRO_0000315154" description="UDP-N-acetylglucosamine--N-acetylmuramyl-(pentapeptide) pyrophosphoryl-undecaprenol N-acetylglucosamine transferase">
    <location>
        <begin position="1"/>
        <end position="366"/>
    </location>
</feature>
<feature type="binding site" evidence="1">
    <location>
        <begin position="14"/>
        <end position="16"/>
    </location>
    <ligand>
        <name>UDP-N-acetyl-alpha-D-glucosamine</name>
        <dbReference type="ChEBI" id="CHEBI:57705"/>
    </ligand>
</feature>
<feature type="binding site" evidence="1">
    <location>
        <position position="125"/>
    </location>
    <ligand>
        <name>UDP-N-acetyl-alpha-D-glucosamine</name>
        <dbReference type="ChEBI" id="CHEBI:57705"/>
    </ligand>
</feature>
<feature type="binding site" evidence="1">
    <location>
        <position position="168"/>
    </location>
    <ligand>
        <name>UDP-N-acetyl-alpha-D-glucosamine</name>
        <dbReference type="ChEBI" id="CHEBI:57705"/>
    </ligand>
</feature>
<feature type="binding site" evidence="1">
    <location>
        <position position="196"/>
    </location>
    <ligand>
        <name>UDP-N-acetyl-alpha-D-glucosamine</name>
        <dbReference type="ChEBI" id="CHEBI:57705"/>
    </ligand>
</feature>
<feature type="binding site" evidence="1">
    <location>
        <position position="297"/>
    </location>
    <ligand>
        <name>UDP-N-acetyl-alpha-D-glucosamine</name>
        <dbReference type="ChEBI" id="CHEBI:57705"/>
    </ligand>
</feature>
<comment type="function">
    <text evidence="1">Cell wall formation. Catalyzes the transfer of a GlcNAc subunit on undecaprenyl-pyrophosphoryl-MurNAc-pentapeptide (lipid intermediate I) to form undecaprenyl-pyrophosphoryl-MurNAc-(pentapeptide)GlcNAc (lipid intermediate II).</text>
</comment>
<comment type="catalytic activity">
    <reaction evidence="1">
        <text>di-trans,octa-cis-undecaprenyl diphospho-N-acetyl-alpha-D-muramoyl-L-alanyl-D-glutamyl-meso-2,6-diaminopimeloyl-D-alanyl-D-alanine + UDP-N-acetyl-alpha-D-glucosamine = di-trans,octa-cis-undecaprenyl diphospho-[N-acetyl-alpha-D-glucosaminyl-(1-&gt;4)]-N-acetyl-alpha-D-muramoyl-L-alanyl-D-glutamyl-meso-2,6-diaminopimeloyl-D-alanyl-D-alanine + UDP + H(+)</text>
        <dbReference type="Rhea" id="RHEA:31227"/>
        <dbReference type="ChEBI" id="CHEBI:15378"/>
        <dbReference type="ChEBI" id="CHEBI:57705"/>
        <dbReference type="ChEBI" id="CHEBI:58223"/>
        <dbReference type="ChEBI" id="CHEBI:61387"/>
        <dbReference type="ChEBI" id="CHEBI:61388"/>
        <dbReference type="EC" id="2.4.1.227"/>
    </reaction>
</comment>
<comment type="pathway">
    <text evidence="1">Cell wall biogenesis; peptidoglycan biosynthesis.</text>
</comment>
<comment type="subcellular location">
    <subcellularLocation>
        <location evidence="1">Cell inner membrane</location>
        <topology evidence="1">Peripheral membrane protein</topology>
        <orientation evidence="1">Cytoplasmic side</orientation>
    </subcellularLocation>
</comment>
<comment type="similarity">
    <text evidence="1">Belongs to the glycosyltransferase 28 family. MurG subfamily.</text>
</comment>
<accession>Q133X1</accession>
<keyword id="KW-0131">Cell cycle</keyword>
<keyword id="KW-0132">Cell division</keyword>
<keyword id="KW-0997">Cell inner membrane</keyword>
<keyword id="KW-1003">Cell membrane</keyword>
<keyword id="KW-0133">Cell shape</keyword>
<keyword id="KW-0961">Cell wall biogenesis/degradation</keyword>
<keyword id="KW-0328">Glycosyltransferase</keyword>
<keyword id="KW-0472">Membrane</keyword>
<keyword id="KW-0573">Peptidoglycan synthesis</keyword>
<keyword id="KW-0808">Transferase</keyword>
<name>MURG_RHOPS</name>
<dbReference type="EC" id="2.4.1.227" evidence="1"/>
<dbReference type="EMBL" id="CP000283">
    <property type="protein sequence ID" value="ABE40618.1"/>
    <property type="molecule type" value="Genomic_DNA"/>
</dbReference>
<dbReference type="SMR" id="Q133X1"/>
<dbReference type="STRING" id="316057.RPD_3394"/>
<dbReference type="CAZy" id="GT28">
    <property type="family name" value="Glycosyltransferase Family 28"/>
</dbReference>
<dbReference type="KEGG" id="rpd:RPD_3394"/>
<dbReference type="eggNOG" id="COG0707">
    <property type="taxonomic scope" value="Bacteria"/>
</dbReference>
<dbReference type="HOGENOM" id="CLU_037404_2_1_5"/>
<dbReference type="BioCyc" id="RPAL316057:RPD_RS17070-MONOMER"/>
<dbReference type="UniPathway" id="UPA00219"/>
<dbReference type="Proteomes" id="UP000001818">
    <property type="component" value="Chromosome"/>
</dbReference>
<dbReference type="GO" id="GO:0005886">
    <property type="term" value="C:plasma membrane"/>
    <property type="evidence" value="ECO:0007669"/>
    <property type="project" value="UniProtKB-SubCell"/>
</dbReference>
<dbReference type="GO" id="GO:0051991">
    <property type="term" value="F:UDP-N-acetyl-D-glucosamine:N-acetylmuramoyl-L-alanyl-D-glutamyl-meso-2,6-diaminopimelyl-D-alanyl-D-alanine-diphosphoundecaprenol 4-beta-N-acetylglucosaminlytransferase activity"/>
    <property type="evidence" value="ECO:0007669"/>
    <property type="project" value="RHEA"/>
</dbReference>
<dbReference type="GO" id="GO:0050511">
    <property type="term" value="F:undecaprenyldiphospho-muramoylpentapeptide beta-N-acetylglucosaminyltransferase activity"/>
    <property type="evidence" value="ECO:0007669"/>
    <property type="project" value="UniProtKB-UniRule"/>
</dbReference>
<dbReference type="GO" id="GO:0005975">
    <property type="term" value="P:carbohydrate metabolic process"/>
    <property type="evidence" value="ECO:0007669"/>
    <property type="project" value="InterPro"/>
</dbReference>
<dbReference type="GO" id="GO:0051301">
    <property type="term" value="P:cell division"/>
    <property type="evidence" value="ECO:0007669"/>
    <property type="project" value="UniProtKB-KW"/>
</dbReference>
<dbReference type="GO" id="GO:0071555">
    <property type="term" value="P:cell wall organization"/>
    <property type="evidence" value="ECO:0007669"/>
    <property type="project" value="UniProtKB-KW"/>
</dbReference>
<dbReference type="GO" id="GO:0030259">
    <property type="term" value="P:lipid glycosylation"/>
    <property type="evidence" value="ECO:0007669"/>
    <property type="project" value="UniProtKB-UniRule"/>
</dbReference>
<dbReference type="GO" id="GO:0009252">
    <property type="term" value="P:peptidoglycan biosynthetic process"/>
    <property type="evidence" value="ECO:0007669"/>
    <property type="project" value="UniProtKB-UniRule"/>
</dbReference>
<dbReference type="GO" id="GO:0008360">
    <property type="term" value="P:regulation of cell shape"/>
    <property type="evidence" value="ECO:0007669"/>
    <property type="project" value="UniProtKB-KW"/>
</dbReference>
<dbReference type="CDD" id="cd03785">
    <property type="entry name" value="GT28_MurG"/>
    <property type="match status" value="1"/>
</dbReference>
<dbReference type="Gene3D" id="3.40.50.2000">
    <property type="entry name" value="Glycogen Phosphorylase B"/>
    <property type="match status" value="2"/>
</dbReference>
<dbReference type="HAMAP" id="MF_00033">
    <property type="entry name" value="MurG"/>
    <property type="match status" value="1"/>
</dbReference>
<dbReference type="InterPro" id="IPR006009">
    <property type="entry name" value="GlcNAc_MurG"/>
</dbReference>
<dbReference type="InterPro" id="IPR007235">
    <property type="entry name" value="Glyco_trans_28_C"/>
</dbReference>
<dbReference type="InterPro" id="IPR004276">
    <property type="entry name" value="GlycoTrans_28_N"/>
</dbReference>
<dbReference type="NCBIfam" id="TIGR01133">
    <property type="entry name" value="murG"/>
    <property type="match status" value="1"/>
</dbReference>
<dbReference type="PANTHER" id="PTHR21015:SF22">
    <property type="entry name" value="GLYCOSYLTRANSFERASE"/>
    <property type="match status" value="1"/>
</dbReference>
<dbReference type="PANTHER" id="PTHR21015">
    <property type="entry name" value="UDP-N-ACETYLGLUCOSAMINE--N-ACETYLMURAMYL-(PENTAPEPTIDE) PYROPHOSPHORYL-UNDECAPRENOL N-ACETYLGLUCOSAMINE TRANSFERASE 1"/>
    <property type="match status" value="1"/>
</dbReference>
<dbReference type="Pfam" id="PF04101">
    <property type="entry name" value="Glyco_tran_28_C"/>
    <property type="match status" value="1"/>
</dbReference>
<dbReference type="Pfam" id="PF03033">
    <property type="entry name" value="Glyco_transf_28"/>
    <property type="match status" value="1"/>
</dbReference>
<dbReference type="SUPFAM" id="SSF53756">
    <property type="entry name" value="UDP-Glycosyltransferase/glycogen phosphorylase"/>
    <property type="match status" value="1"/>
</dbReference>
<protein>
    <recommendedName>
        <fullName evidence="1">UDP-N-acetylglucosamine--N-acetylmuramyl-(pentapeptide) pyrophosphoryl-undecaprenol N-acetylglucosamine transferase</fullName>
        <ecNumber evidence="1">2.4.1.227</ecNumber>
    </recommendedName>
    <alternativeName>
        <fullName evidence="1">Undecaprenyl-PP-MurNAc-pentapeptide-UDPGlcNAc GlcNAc transferase</fullName>
    </alternativeName>
</protein>
<reference key="1">
    <citation type="submission" date="2006-03" db="EMBL/GenBank/DDBJ databases">
        <title>Complete sequence of Rhodopseudomonas palustris BisB5.</title>
        <authorList>
            <consortium name="US DOE Joint Genome Institute"/>
            <person name="Copeland A."/>
            <person name="Lucas S."/>
            <person name="Lapidus A."/>
            <person name="Barry K."/>
            <person name="Detter J.C."/>
            <person name="Glavina del Rio T."/>
            <person name="Hammon N."/>
            <person name="Israni S."/>
            <person name="Dalin E."/>
            <person name="Tice H."/>
            <person name="Pitluck S."/>
            <person name="Chain P."/>
            <person name="Malfatti S."/>
            <person name="Shin M."/>
            <person name="Vergez L."/>
            <person name="Schmutz J."/>
            <person name="Larimer F."/>
            <person name="Land M."/>
            <person name="Hauser L."/>
            <person name="Pelletier D.A."/>
            <person name="Kyrpides N."/>
            <person name="Lykidis A."/>
            <person name="Oda Y."/>
            <person name="Harwood C.S."/>
            <person name="Richardson P."/>
        </authorList>
    </citation>
    <scope>NUCLEOTIDE SEQUENCE [LARGE SCALE GENOMIC DNA]</scope>
    <source>
        <strain>BisB5</strain>
    </source>
</reference>
<proteinExistence type="inferred from homology"/>
<gene>
    <name evidence="1" type="primary">murG</name>
    <name type="ordered locus">RPD_3394</name>
</gene>